<organism>
    <name type="scientific">Methylobacterium nodulans (strain LMG 21967 / CNCM I-2342 / ORS 2060)</name>
    <dbReference type="NCBI Taxonomy" id="460265"/>
    <lineage>
        <taxon>Bacteria</taxon>
        <taxon>Pseudomonadati</taxon>
        <taxon>Pseudomonadota</taxon>
        <taxon>Alphaproteobacteria</taxon>
        <taxon>Hyphomicrobiales</taxon>
        <taxon>Methylobacteriaceae</taxon>
        <taxon>Methylobacterium</taxon>
    </lineage>
</organism>
<accession>B8IU50</accession>
<feature type="chain" id="PRO_1000146008" description="Chaperone protein HtpG">
    <location>
        <begin position="1"/>
        <end position="611"/>
    </location>
</feature>
<feature type="region of interest" description="A; substrate-binding" evidence="1">
    <location>
        <begin position="1"/>
        <end position="326"/>
    </location>
</feature>
<feature type="region of interest" description="B" evidence="1">
    <location>
        <begin position="327"/>
        <end position="536"/>
    </location>
</feature>
<feature type="region of interest" description="C" evidence="1">
    <location>
        <begin position="537"/>
        <end position="611"/>
    </location>
</feature>
<sequence length="611" mass="67373">MSETLERHAFGAEVGRLLDLVVHALYSEREIFLRELVANAADAVDRRRFGALTDPALALPAEAKVRIRPDKAARTLTISDPGIGMGKEDLAQNLGTIARSGTRAFSQSLAEAKPDERPSLIGQFGVGFYSAFMVADRVEVTSRRAGSDEAWTWASDGEGEYTLSPATREEPGTDVVLHMKADADEYLEPLRIETIVRKWADHITVPITLLRDGEEVSGNEGTALWRKPKAEITEETYTAFYRHLTHNFDTPWATLHWRAEGALDFSALLFIPSMKPFLAVEEERESKVRLHVRRMFITDEAGLLPSWLRFVQGVVDTEDLPLNVSREMLQATPVLARIRRAVTAKVLSELKSRAKDADGYASFWQAFGPVLKEGIWEDAEQRDDIAGLIRFRSSAVEGWTSFADYVSRMKPNQEAIYILVGDDTKALASSAQIEGFRARGIEVLLLSDHVDAFWPERLDKFDGKPIRSITQSADDLSAFAPEGESEGEAADLADLVPKLKEILKDDVTDVRASQRLVESAVLLSASSGGPDLQMQRLLRRAGRGFGAGLPVLELNPRHALVRRLAERAKTGEDIAEAAQTLLDLAHVQGGDAPRDPVAFARRVATALAAQG</sequence>
<name>HTPG_METNO</name>
<comment type="function">
    <text evidence="1">Molecular chaperone. Has ATPase activity.</text>
</comment>
<comment type="subunit">
    <text evidence="1">Homodimer.</text>
</comment>
<comment type="subcellular location">
    <subcellularLocation>
        <location evidence="1">Cytoplasm</location>
    </subcellularLocation>
</comment>
<comment type="similarity">
    <text evidence="1">Belongs to the heat shock protein 90 family.</text>
</comment>
<gene>
    <name evidence="1" type="primary">htpG</name>
    <name type="ordered locus">Mnod_0044</name>
</gene>
<reference key="1">
    <citation type="submission" date="2009-01" db="EMBL/GenBank/DDBJ databases">
        <title>Complete sequence of chromosome of Methylobacterium nodulans ORS 2060.</title>
        <authorList>
            <consortium name="US DOE Joint Genome Institute"/>
            <person name="Lucas S."/>
            <person name="Copeland A."/>
            <person name="Lapidus A."/>
            <person name="Glavina del Rio T."/>
            <person name="Dalin E."/>
            <person name="Tice H."/>
            <person name="Bruce D."/>
            <person name="Goodwin L."/>
            <person name="Pitluck S."/>
            <person name="Sims D."/>
            <person name="Brettin T."/>
            <person name="Detter J.C."/>
            <person name="Han C."/>
            <person name="Larimer F."/>
            <person name="Land M."/>
            <person name="Hauser L."/>
            <person name="Kyrpides N."/>
            <person name="Ivanova N."/>
            <person name="Marx C.J."/>
            <person name="Richardson P."/>
        </authorList>
    </citation>
    <scope>NUCLEOTIDE SEQUENCE [LARGE SCALE GENOMIC DNA]</scope>
    <source>
        <strain>LMG 21967 / CNCM I-2342 / ORS 2060</strain>
    </source>
</reference>
<protein>
    <recommendedName>
        <fullName evidence="1">Chaperone protein HtpG</fullName>
    </recommendedName>
    <alternativeName>
        <fullName evidence="1">Heat shock protein HtpG</fullName>
    </alternativeName>
    <alternativeName>
        <fullName evidence="1">High temperature protein G</fullName>
    </alternativeName>
</protein>
<keyword id="KW-0067">ATP-binding</keyword>
<keyword id="KW-0143">Chaperone</keyword>
<keyword id="KW-0963">Cytoplasm</keyword>
<keyword id="KW-0547">Nucleotide-binding</keyword>
<keyword id="KW-1185">Reference proteome</keyword>
<keyword id="KW-0346">Stress response</keyword>
<evidence type="ECO:0000255" key="1">
    <source>
        <dbReference type="HAMAP-Rule" id="MF_00505"/>
    </source>
</evidence>
<proteinExistence type="inferred from homology"/>
<dbReference type="EMBL" id="CP001349">
    <property type="protein sequence ID" value="ACL55095.1"/>
    <property type="molecule type" value="Genomic_DNA"/>
</dbReference>
<dbReference type="RefSeq" id="WP_012634334.1">
    <property type="nucleotide sequence ID" value="NC_011894.1"/>
</dbReference>
<dbReference type="SMR" id="B8IU50"/>
<dbReference type="STRING" id="460265.Mnod_0044"/>
<dbReference type="KEGG" id="mno:Mnod_0044"/>
<dbReference type="eggNOG" id="COG0326">
    <property type="taxonomic scope" value="Bacteria"/>
</dbReference>
<dbReference type="HOGENOM" id="CLU_006684_3_0_5"/>
<dbReference type="OrthoDB" id="9802640at2"/>
<dbReference type="Proteomes" id="UP000008207">
    <property type="component" value="Chromosome"/>
</dbReference>
<dbReference type="GO" id="GO:0005737">
    <property type="term" value="C:cytoplasm"/>
    <property type="evidence" value="ECO:0007669"/>
    <property type="project" value="UniProtKB-SubCell"/>
</dbReference>
<dbReference type="GO" id="GO:0005524">
    <property type="term" value="F:ATP binding"/>
    <property type="evidence" value="ECO:0007669"/>
    <property type="project" value="UniProtKB-UniRule"/>
</dbReference>
<dbReference type="GO" id="GO:0016887">
    <property type="term" value="F:ATP hydrolysis activity"/>
    <property type="evidence" value="ECO:0007669"/>
    <property type="project" value="InterPro"/>
</dbReference>
<dbReference type="GO" id="GO:0140662">
    <property type="term" value="F:ATP-dependent protein folding chaperone"/>
    <property type="evidence" value="ECO:0007669"/>
    <property type="project" value="InterPro"/>
</dbReference>
<dbReference type="GO" id="GO:0051082">
    <property type="term" value="F:unfolded protein binding"/>
    <property type="evidence" value="ECO:0007669"/>
    <property type="project" value="UniProtKB-UniRule"/>
</dbReference>
<dbReference type="CDD" id="cd16927">
    <property type="entry name" value="HATPase_Hsp90-like"/>
    <property type="match status" value="1"/>
</dbReference>
<dbReference type="FunFam" id="3.30.565.10:FF:000357">
    <property type="entry name" value="Heat shock protein HSP 90-beta"/>
    <property type="match status" value="1"/>
</dbReference>
<dbReference type="Gene3D" id="3.30.230.80">
    <property type="match status" value="1"/>
</dbReference>
<dbReference type="Gene3D" id="3.40.50.11260">
    <property type="match status" value="1"/>
</dbReference>
<dbReference type="Gene3D" id="1.20.120.790">
    <property type="entry name" value="Heat shock protein 90, C-terminal domain"/>
    <property type="match status" value="1"/>
</dbReference>
<dbReference type="Gene3D" id="3.30.565.10">
    <property type="entry name" value="Histidine kinase-like ATPase, C-terminal domain"/>
    <property type="match status" value="1"/>
</dbReference>
<dbReference type="HAMAP" id="MF_00505">
    <property type="entry name" value="HSP90"/>
    <property type="match status" value="1"/>
</dbReference>
<dbReference type="InterPro" id="IPR036890">
    <property type="entry name" value="HATPase_C_sf"/>
</dbReference>
<dbReference type="InterPro" id="IPR037196">
    <property type="entry name" value="HSP90_C"/>
</dbReference>
<dbReference type="InterPro" id="IPR001404">
    <property type="entry name" value="Hsp90_fam"/>
</dbReference>
<dbReference type="InterPro" id="IPR020575">
    <property type="entry name" value="Hsp90_N"/>
</dbReference>
<dbReference type="InterPro" id="IPR020568">
    <property type="entry name" value="Ribosomal_Su5_D2-typ_SF"/>
</dbReference>
<dbReference type="NCBIfam" id="NF003555">
    <property type="entry name" value="PRK05218.1"/>
    <property type="match status" value="1"/>
</dbReference>
<dbReference type="PANTHER" id="PTHR11528">
    <property type="entry name" value="HEAT SHOCK PROTEIN 90 FAMILY MEMBER"/>
    <property type="match status" value="1"/>
</dbReference>
<dbReference type="Pfam" id="PF13589">
    <property type="entry name" value="HATPase_c_3"/>
    <property type="match status" value="1"/>
</dbReference>
<dbReference type="Pfam" id="PF00183">
    <property type="entry name" value="HSP90"/>
    <property type="match status" value="1"/>
</dbReference>
<dbReference type="PIRSF" id="PIRSF002583">
    <property type="entry name" value="Hsp90"/>
    <property type="match status" value="1"/>
</dbReference>
<dbReference type="PRINTS" id="PR00775">
    <property type="entry name" value="HEATSHOCK90"/>
</dbReference>
<dbReference type="SMART" id="SM00387">
    <property type="entry name" value="HATPase_c"/>
    <property type="match status" value="1"/>
</dbReference>
<dbReference type="SUPFAM" id="SSF55874">
    <property type="entry name" value="ATPase domain of HSP90 chaperone/DNA topoisomerase II/histidine kinase"/>
    <property type="match status" value="1"/>
</dbReference>
<dbReference type="SUPFAM" id="SSF110942">
    <property type="entry name" value="HSP90 C-terminal domain"/>
    <property type="match status" value="1"/>
</dbReference>
<dbReference type="SUPFAM" id="SSF54211">
    <property type="entry name" value="Ribosomal protein S5 domain 2-like"/>
    <property type="match status" value="1"/>
</dbReference>